<proteinExistence type="evidence at transcript level"/>
<comment type="function">
    <text evidence="1">Transcriptional repressor that plays a role in various developmental processes such as myogenesis and brain development. Specifically binds the consensus DNA sequence 5'-[AC]ACATCTG[GT][AC]-3' which contains the E box core, and acts by recruiting chromatin remodeling multiprotein complexes. Plays a key role in myogenesis by directly repressing the expression of ID2 and ID3, 2 inhibitors of skeletal myogenesis. Also involved in controlling cell division of progenitor cells and regulating the survival of postmitotic cortical neurons. May also play a role in the organization of chromosomes in the nucleus (By similarity).</text>
</comment>
<comment type="subunit">
    <text evidence="1">Interacts with DNMT3A.</text>
</comment>
<comment type="subcellular location">
    <subcellularLocation>
        <location evidence="1">Nucleus</location>
    </subcellularLocation>
    <text evidence="1">Associates with condensed chromatin.</text>
</comment>
<comment type="similarity">
    <text evidence="7">Belongs to the krueppel C2H2-type zinc-finger protein family. ZBTB18 subfamily.</text>
</comment>
<comment type="sequence caution" evidence="7">
    <conflict type="erroneous initiation">
        <sequence resource="EMBL-CDS" id="AAI26551"/>
    </conflict>
    <text>Extended N-terminus.</text>
</comment>
<reference key="1">
    <citation type="submission" date="2006-10" db="EMBL/GenBank/DDBJ databases">
        <authorList>
            <consortium name="NIH - Mammalian Gene Collection (MGC) project"/>
        </authorList>
    </citation>
    <scope>NUCLEOTIDE SEQUENCE [LARGE SCALE MRNA]</scope>
    <source>
        <strain>Hereford</strain>
        <tissue>Fetal cerebellum</tissue>
    </source>
</reference>
<keyword id="KW-0217">Developmental protein</keyword>
<keyword id="KW-0238">DNA-binding</keyword>
<keyword id="KW-1017">Isopeptide bond</keyword>
<keyword id="KW-0479">Metal-binding</keyword>
<keyword id="KW-0539">Nucleus</keyword>
<keyword id="KW-0597">Phosphoprotein</keyword>
<keyword id="KW-1185">Reference proteome</keyword>
<keyword id="KW-0677">Repeat</keyword>
<keyword id="KW-0678">Repressor</keyword>
<keyword id="KW-0804">Transcription</keyword>
<keyword id="KW-0805">Transcription regulation</keyword>
<keyword id="KW-0832">Ubl conjugation</keyword>
<keyword id="KW-0862">Zinc</keyword>
<keyword id="KW-0863">Zinc-finger</keyword>
<evidence type="ECO:0000250" key="1"/>
<evidence type="ECO:0000250" key="2">
    <source>
        <dbReference type="UniProtKB" id="Q99592"/>
    </source>
</evidence>
<evidence type="ECO:0000250" key="3">
    <source>
        <dbReference type="UniProtKB" id="Q9JKY3"/>
    </source>
</evidence>
<evidence type="ECO:0000255" key="4">
    <source>
        <dbReference type="PROSITE-ProRule" id="PRU00037"/>
    </source>
</evidence>
<evidence type="ECO:0000255" key="5">
    <source>
        <dbReference type="PROSITE-ProRule" id="PRU00042"/>
    </source>
</evidence>
<evidence type="ECO:0000256" key="6">
    <source>
        <dbReference type="SAM" id="MobiDB-lite"/>
    </source>
</evidence>
<evidence type="ECO:0000305" key="7"/>
<dbReference type="EMBL" id="BC126550">
    <property type="protein sequence ID" value="AAI26551.1"/>
    <property type="status" value="ALT_INIT"/>
    <property type="molecule type" value="mRNA"/>
</dbReference>
<dbReference type="RefSeq" id="NP_001071484.1">
    <property type="nucleotide sequence ID" value="NM_001078016.1"/>
</dbReference>
<dbReference type="SMR" id="A0JN76"/>
<dbReference type="FunCoup" id="A0JN76">
    <property type="interactions" value="514"/>
</dbReference>
<dbReference type="STRING" id="9913.ENSBTAP00000000497"/>
<dbReference type="PaxDb" id="9913-ENSBTAP00000000497"/>
<dbReference type="Ensembl" id="ENSBTAT00000091501.1">
    <property type="protein sequence ID" value="ENSBTAP00000078776.1"/>
    <property type="gene ID" value="ENSBTAG00000000385.7"/>
</dbReference>
<dbReference type="Ensembl" id="ENSBTAT00000121793.1">
    <property type="protein sequence ID" value="ENSBTAP00000099022.1"/>
    <property type="gene ID" value="ENSBTAG00000000385.7"/>
</dbReference>
<dbReference type="GeneID" id="538793"/>
<dbReference type="KEGG" id="bta:538793"/>
<dbReference type="CTD" id="10472"/>
<dbReference type="VGNC" id="VGNC:37063">
    <property type="gene designation" value="ZBTB18"/>
</dbReference>
<dbReference type="eggNOG" id="KOG1721">
    <property type="taxonomic scope" value="Eukaryota"/>
</dbReference>
<dbReference type="GeneTree" id="ENSGT00940000155092"/>
<dbReference type="HOGENOM" id="CLU_034521_0_0_1"/>
<dbReference type="InParanoid" id="A0JN76"/>
<dbReference type="OrthoDB" id="4748970at2759"/>
<dbReference type="TreeFam" id="TF337437"/>
<dbReference type="Proteomes" id="UP000009136">
    <property type="component" value="Chromosome 16"/>
</dbReference>
<dbReference type="GO" id="GO:0005634">
    <property type="term" value="C:nucleus"/>
    <property type="evidence" value="ECO:0000318"/>
    <property type="project" value="GO_Central"/>
</dbReference>
<dbReference type="GO" id="GO:0000981">
    <property type="term" value="F:DNA-binding transcription factor activity, RNA polymerase II-specific"/>
    <property type="evidence" value="ECO:0000318"/>
    <property type="project" value="GO_Central"/>
</dbReference>
<dbReference type="GO" id="GO:0043565">
    <property type="term" value="F:sequence-specific DNA binding"/>
    <property type="evidence" value="ECO:0000250"/>
    <property type="project" value="UniProtKB"/>
</dbReference>
<dbReference type="GO" id="GO:0008270">
    <property type="term" value="F:zinc ion binding"/>
    <property type="evidence" value="ECO:0007669"/>
    <property type="project" value="UniProtKB-KW"/>
</dbReference>
<dbReference type="GO" id="GO:0045892">
    <property type="term" value="P:negative regulation of DNA-templated transcription"/>
    <property type="evidence" value="ECO:0000250"/>
    <property type="project" value="UniProtKB"/>
</dbReference>
<dbReference type="GO" id="GO:0000122">
    <property type="term" value="P:negative regulation of transcription by RNA polymerase II"/>
    <property type="evidence" value="ECO:0000250"/>
    <property type="project" value="UniProtKB"/>
</dbReference>
<dbReference type="GO" id="GO:0006357">
    <property type="term" value="P:regulation of transcription by RNA polymerase II"/>
    <property type="evidence" value="ECO:0000318"/>
    <property type="project" value="GO_Central"/>
</dbReference>
<dbReference type="GO" id="GO:0007519">
    <property type="term" value="P:skeletal muscle tissue development"/>
    <property type="evidence" value="ECO:0000250"/>
    <property type="project" value="UniProtKB"/>
</dbReference>
<dbReference type="CDD" id="cd18324">
    <property type="entry name" value="BTB_POZ_ZBTB18_RP58"/>
    <property type="match status" value="1"/>
</dbReference>
<dbReference type="FunFam" id="3.30.160.60:FF:000114">
    <property type="entry name" value="Zinc finger and BTB domain-containing protein 18"/>
    <property type="match status" value="1"/>
</dbReference>
<dbReference type="FunFam" id="3.30.160.60:FF:000220">
    <property type="entry name" value="Zinc finger and BTB domain-containing protein 18"/>
    <property type="match status" value="1"/>
</dbReference>
<dbReference type="FunFam" id="3.30.710.10:FF:000021">
    <property type="entry name" value="Zinc finger and BTB domain-containing protein 18"/>
    <property type="match status" value="1"/>
</dbReference>
<dbReference type="FunFam" id="3.30.160.60:FF:000892">
    <property type="entry name" value="zinc finger and BTB domain-containing protein 3"/>
    <property type="match status" value="1"/>
</dbReference>
<dbReference type="Gene3D" id="3.30.160.60">
    <property type="entry name" value="Classic Zinc Finger"/>
    <property type="match status" value="3"/>
</dbReference>
<dbReference type="Gene3D" id="3.30.710.10">
    <property type="entry name" value="Potassium Channel Kv1.1, Chain A"/>
    <property type="match status" value="1"/>
</dbReference>
<dbReference type="InterPro" id="IPR000210">
    <property type="entry name" value="BTB/POZ_dom"/>
</dbReference>
<dbReference type="InterPro" id="IPR011333">
    <property type="entry name" value="SKP1/BTB/POZ_sf"/>
</dbReference>
<dbReference type="InterPro" id="IPR036236">
    <property type="entry name" value="Znf_C2H2_sf"/>
</dbReference>
<dbReference type="InterPro" id="IPR013087">
    <property type="entry name" value="Znf_C2H2_type"/>
</dbReference>
<dbReference type="PANTHER" id="PTHR24394:SF18">
    <property type="entry name" value="ZINC FINGER AND BTB DOMAIN-CONTAINING PROTEIN 18"/>
    <property type="match status" value="1"/>
</dbReference>
<dbReference type="PANTHER" id="PTHR24394">
    <property type="entry name" value="ZINC FINGER PROTEIN"/>
    <property type="match status" value="1"/>
</dbReference>
<dbReference type="Pfam" id="PF00651">
    <property type="entry name" value="BTB"/>
    <property type="match status" value="1"/>
</dbReference>
<dbReference type="Pfam" id="PF00096">
    <property type="entry name" value="zf-C2H2"/>
    <property type="match status" value="3"/>
</dbReference>
<dbReference type="Pfam" id="PF13894">
    <property type="entry name" value="zf-C2H2_4"/>
    <property type="match status" value="1"/>
</dbReference>
<dbReference type="SMART" id="SM00225">
    <property type="entry name" value="BTB"/>
    <property type="match status" value="1"/>
</dbReference>
<dbReference type="SMART" id="SM00355">
    <property type="entry name" value="ZnF_C2H2"/>
    <property type="match status" value="4"/>
</dbReference>
<dbReference type="SUPFAM" id="SSF57667">
    <property type="entry name" value="beta-beta-alpha zinc fingers"/>
    <property type="match status" value="3"/>
</dbReference>
<dbReference type="SUPFAM" id="SSF54695">
    <property type="entry name" value="POZ domain"/>
    <property type="match status" value="1"/>
</dbReference>
<dbReference type="PROSITE" id="PS50097">
    <property type="entry name" value="BTB"/>
    <property type="match status" value="1"/>
</dbReference>
<dbReference type="PROSITE" id="PS00028">
    <property type="entry name" value="ZINC_FINGER_C2H2_1"/>
    <property type="match status" value="4"/>
</dbReference>
<dbReference type="PROSITE" id="PS50157">
    <property type="entry name" value="ZINC_FINGER_C2H2_2"/>
    <property type="match status" value="4"/>
</dbReference>
<name>ZBT18_BOVIN</name>
<protein>
    <recommendedName>
        <fullName>Zinc finger and BTB domain-containing protein 18</fullName>
    </recommendedName>
    <alternativeName>
        <fullName>Zinc finger protein 238</fullName>
    </alternativeName>
</protein>
<sequence>MEFPDHSRHLLQCLSEQRHQGFLCDCTVLVGDAQFRAHRAVLASCSMYFHLFYKDQLDKRDIVHLNSDIVTAPAFALLLEFMYEGKLQFKDLPIEDVLAAASYLHMYDIVKVCKKKLKEKATTEADSTKKEEDASSCSDKVESLSDGSSHMAGDLPSDEDEGEDEKLNILPSKRDLAAEPGNMWMRLPSDSAGIPQAGGEAEPHATAAGKTVASPCSSTESLSQRSVTSVRDSADVDCVLDLSVKSSLSGVENLNSSYFSSQDVLRSNLVQVKVEKEASCDESDVGTNDYDMEHSTVKESVSTNNRVQYEPAHLAPLREDSVLRELEREDKASDDEMMTPESERVQVEGGMESSLLPYVSNILSPAGQIFMCPLCNKVFPSPHILQIHLSTHFREQDGLRSKPAADVNVPTCSLCGKTFSCMYTLKRHERTHSGEKPYTCTQCGKSFQYSHNLSRHAVVHTREKPHACKWCERRFTQSGDLYRHIRKFHCELVNSLSVKSEALSLPAVRDWTLEDSSQELWK</sequence>
<feature type="chain" id="PRO_0000391924" description="Zinc finger and BTB domain-containing protein 18">
    <location>
        <begin position="1"/>
        <end position="522"/>
    </location>
</feature>
<feature type="domain" description="BTB" evidence="4">
    <location>
        <begin position="24"/>
        <end position="91"/>
    </location>
</feature>
<feature type="zinc finger region" description="C2H2-type 1" evidence="5">
    <location>
        <begin position="370"/>
        <end position="392"/>
    </location>
</feature>
<feature type="zinc finger region" description="C2H2-type 2" evidence="5">
    <location>
        <begin position="410"/>
        <end position="432"/>
    </location>
</feature>
<feature type="zinc finger region" description="C2H2-type 3" evidence="5">
    <location>
        <begin position="438"/>
        <end position="460"/>
    </location>
</feature>
<feature type="zinc finger region" description="C2H2-type 4" evidence="5">
    <location>
        <begin position="466"/>
        <end position="489"/>
    </location>
</feature>
<feature type="region of interest" description="Disordered" evidence="6">
    <location>
        <begin position="121"/>
        <end position="165"/>
    </location>
</feature>
<feature type="region of interest" description="Interaction with DNMT3A" evidence="1">
    <location>
        <begin position="310"/>
        <end position="427"/>
    </location>
</feature>
<feature type="compositionally biased region" description="Basic and acidic residues" evidence="6">
    <location>
        <begin position="121"/>
        <end position="143"/>
    </location>
</feature>
<feature type="modified residue" description="Phosphoserine" evidence="3">
    <location>
        <position position="157"/>
    </location>
</feature>
<feature type="modified residue" description="Phosphoserine" evidence="2">
    <location>
        <position position="516"/>
    </location>
</feature>
<feature type="modified residue" description="Phosphoserine" evidence="2">
    <location>
        <position position="517"/>
    </location>
</feature>
<feature type="cross-link" description="Glycyl lysine isopeptide (Lys-Gly) (interchain with G-Cter in SUMO2)" evidence="2">
    <location>
        <position position="273"/>
    </location>
</feature>
<accession>A0JN76</accession>
<gene>
    <name type="primary">ZBTB18</name>
    <name type="synonym">ZNF238</name>
</gene>
<organism>
    <name type="scientific">Bos taurus</name>
    <name type="common">Bovine</name>
    <dbReference type="NCBI Taxonomy" id="9913"/>
    <lineage>
        <taxon>Eukaryota</taxon>
        <taxon>Metazoa</taxon>
        <taxon>Chordata</taxon>
        <taxon>Craniata</taxon>
        <taxon>Vertebrata</taxon>
        <taxon>Euteleostomi</taxon>
        <taxon>Mammalia</taxon>
        <taxon>Eutheria</taxon>
        <taxon>Laurasiatheria</taxon>
        <taxon>Artiodactyla</taxon>
        <taxon>Ruminantia</taxon>
        <taxon>Pecora</taxon>
        <taxon>Bovidae</taxon>
        <taxon>Bovinae</taxon>
        <taxon>Bos</taxon>
    </lineage>
</organism>